<keyword id="KW-0312">Gluconeogenesis</keyword>
<keyword id="KW-0324">Glycolysis</keyword>
<keyword id="KW-0413">Isomerase</keyword>
<gene>
    <name evidence="1" type="primary">gpmA</name>
    <name type="ordered locus">NMCC_1509</name>
</gene>
<sequence length="227" mass="25959">MELVFIRHGQSEWNAKNLFTGWRDVKLSEQGLAEAAAAGKKLKENGYEFDIAFTSVLTRAIKTCNIVLEESDQLFVPQIKTWRLNERHYGQLQGLDKKQTAEKYGDEQVRIWRRSYDTLPPLLDKDDEFSAHKDRRYAHLPADVVPDGENLKVTLERVLPFWEDQIAPAILSGKRVLVAAHGNSLRALAKHIEGISDEDIMGLEIPTGQPLVYKLDDNLKVLEKFYL</sequence>
<reference key="1">
    <citation type="journal article" date="2008" name="Genomics">
        <title>Characterization of ST-4821 complex, a unique Neisseria meningitidis clone.</title>
        <authorList>
            <person name="Peng J."/>
            <person name="Yang L."/>
            <person name="Yang F."/>
            <person name="Yang J."/>
            <person name="Yan Y."/>
            <person name="Nie H."/>
            <person name="Zhang X."/>
            <person name="Xiong Z."/>
            <person name="Jiang Y."/>
            <person name="Cheng F."/>
            <person name="Xu X."/>
            <person name="Chen S."/>
            <person name="Sun L."/>
            <person name="Li W."/>
            <person name="Shen Y."/>
            <person name="Shao Z."/>
            <person name="Liang X."/>
            <person name="Xu J."/>
            <person name="Jin Q."/>
        </authorList>
    </citation>
    <scope>NUCLEOTIDE SEQUENCE [LARGE SCALE GENOMIC DNA]</scope>
    <source>
        <strain>053442</strain>
    </source>
</reference>
<proteinExistence type="inferred from homology"/>
<comment type="function">
    <text evidence="1">Catalyzes the interconversion of 2-phosphoglycerate and 3-phosphoglycerate.</text>
</comment>
<comment type="catalytic activity">
    <reaction evidence="1">
        <text>(2R)-2-phosphoglycerate = (2R)-3-phosphoglycerate</text>
        <dbReference type="Rhea" id="RHEA:15901"/>
        <dbReference type="ChEBI" id="CHEBI:58272"/>
        <dbReference type="ChEBI" id="CHEBI:58289"/>
        <dbReference type="EC" id="5.4.2.11"/>
    </reaction>
</comment>
<comment type="pathway">
    <text evidence="1">Carbohydrate degradation; glycolysis; pyruvate from D-glyceraldehyde 3-phosphate: step 3/5.</text>
</comment>
<comment type="subunit">
    <text evidence="1">Homodimer.</text>
</comment>
<comment type="similarity">
    <text evidence="1">Belongs to the phosphoglycerate mutase family. BPG-dependent PGAM subfamily.</text>
</comment>
<dbReference type="EC" id="5.4.2.11" evidence="1"/>
<dbReference type="EMBL" id="CP000381">
    <property type="protein sequence ID" value="ABX73667.1"/>
    <property type="molecule type" value="Genomic_DNA"/>
</dbReference>
<dbReference type="RefSeq" id="WP_012221885.1">
    <property type="nucleotide sequence ID" value="NC_010120.1"/>
</dbReference>
<dbReference type="SMR" id="A9M1A2"/>
<dbReference type="KEGG" id="nmn:NMCC_1509"/>
<dbReference type="HOGENOM" id="CLU_033323_1_5_4"/>
<dbReference type="UniPathway" id="UPA00109">
    <property type="reaction ID" value="UER00186"/>
</dbReference>
<dbReference type="Proteomes" id="UP000001177">
    <property type="component" value="Chromosome"/>
</dbReference>
<dbReference type="GO" id="GO:0004619">
    <property type="term" value="F:phosphoglycerate mutase activity"/>
    <property type="evidence" value="ECO:0007669"/>
    <property type="project" value="UniProtKB-EC"/>
</dbReference>
<dbReference type="GO" id="GO:0006094">
    <property type="term" value="P:gluconeogenesis"/>
    <property type="evidence" value="ECO:0007669"/>
    <property type="project" value="UniProtKB-UniRule"/>
</dbReference>
<dbReference type="GO" id="GO:0006096">
    <property type="term" value="P:glycolytic process"/>
    <property type="evidence" value="ECO:0007669"/>
    <property type="project" value="UniProtKB-UniRule"/>
</dbReference>
<dbReference type="CDD" id="cd07067">
    <property type="entry name" value="HP_PGM_like"/>
    <property type="match status" value="1"/>
</dbReference>
<dbReference type="FunFam" id="3.40.50.1240:FF:000003">
    <property type="entry name" value="2,3-bisphosphoglycerate-dependent phosphoglycerate mutase"/>
    <property type="match status" value="1"/>
</dbReference>
<dbReference type="Gene3D" id="3.40.50.1240">
    <property type="entry name" value="Phosphoglycerate mutase-like"/>
    <property type="match status" value="1"/>
</dbReference>
<dbReference type="HAMAP" id="MF_01039">
    <property type="entry name" value="PGAM_GpmA"/>
    <property type="match status" value="1"/>
</dbReference>
<dbReference type="InterPro" id="IPR013078">
    <property type="entry name" value="His_Pase_superF_clade-1"/>
</dbReference>
<dbReference type="InterPro" id="IPR029033">
    <property type="entry name" value="His_PPase_superfam"/>
</dbReference>
<dbReference type="InterPro" id="IPR005952">
    <property type="entry name" value="Phosphogly_mut1"/>
</dbReference>
<dbReference type="NCBIfam" id="TIGR01258">
    <property type="entry name" value="pgm_1"/>
    <property type="match status" value="1"/>
</dbReference>
<dbReference type="NCBIfam" id="NF010713">
    <property type="entry name" value="PRK14115.1"/>
    <property type="match status" value="1"/>
</dbReference>
<dbReference type="NCBIfam" id="NF010716">
    <property type="entry name" value="PRK14118.1"/>
    <property type="match status" value="1"/>
</dbReference>
<dbReference type="PANTHER" id="PTHR11931">
    <property type="entry name" value="PHOSPHOGLYCERATE MUTASE"/>
    <property type="match status" value="1"/>
</dbReference>
<dbReference type="Pfam" id="PF00300">
    <property type="entry name" value="His_Phos_1"/>
    <property type="match status" value="1"/>
</dbReference>
<dbReference type="PIRSF" id="PIRSF000709">
    <property type="entry name" value="6PFK_2-Ptase"/>
    <property type="match status" value="1"/>
</dbReference>
<dbReference type="SMART" id="SM00855">
    <property type="entry name" value="PGAM"/>
    <property type="match status" value="1"/>
</dbReference>
<dbReference type="SUPFAM" id="SSF53254">
    <property type="entry name" value="Phosphoglycerate mutase-like"/>
    <property type="match status" value="1"/>
</dbReference>
<feature type="chain" id="PRO_1000084326" description="2,3-bisphosphoglycerate-dependent phosphoglycerate mutase">
    <location>
        <begin position="1"/>
        <end position="227"/>
    </location>
</feature>
<feature type="active site" description="Tele-phosphohistidine intermediate" evidence="1">
    <location>
        <position position="8"/>
    </location>
</feature>
<feature type="active site" description="Proton donor/acceptor" evidence="1">
    <location>
        <position position="86"/>
    </location>
</feature>
<feature type="binding site" evidence="1">
    <location>
        <begin position="7"/>
        <end position="14"/>
    </location>
    <ligand>
        <name>substrate</name>
    </ligand>
</feature>
<feature type="binding site" evidence="1">
    <location>
        <begin position="20"/>
        <end position="21"/>
    </location>
    <ligand>
        <name>substrate</name>
    </ligand>
</feature>
<feature type="binding site" evidence="1">
    <location>
        <position position="59"/>
    </location>
    <ligand>
        <name>substrate</name>
    </ligand>
</feature>
<feature type="binding site" evidence="1">
    <location>
        <begin position="86"/>
        <end position="89"/>
    </location>
    <ligand>
        <name>substrate</name>
    </ligand>
</feature>
<feature type="binding site" evidence="1">
    <location>
        <position position="97"/>
    </location>
    <ligand>
        <name>substrate</name>
    </ligand>
</feature>
<feature type="binding site" evidence="1">
    <location>
        <begin position="113"/>
        <end position="114"/>
    </location>
    <ligand>
        <name>substrate</name>
    </ligand>
</feature>
<feature type="binding site" evidence="1">
    <location>
        <begin position="182"/>
        <end position="183"/>
    </location>
    <ligand>
        <name>substrate</name>
    </ligand>
</feature>
<feature type="site" description="Transition state stabilizer" evidence="1">
    <location>
        <position position="181"/>
    </location>
</feature>
<accession>A9M1A2</accession>
<name>GPMA_NEIM0</name>
<protein>
    <recommendedName>
        <fullName evidence="1">2,3-bisphosphoglycerate-dependent phosphoglycerate mutase</fullName>
        <shortName evidence="1">BPG-dependent PGAM</shortName>
        <shortName evidence="1">PGAM</shortName>
        <shortName evidence="1">Phosphoglyceromutase</shortName>
        <shortName evidence="1">dPGM</shortName>
        <ecNumber evidence="1">5.4.2.11</ecNumber>
    </recommendedName>
</protein>
<organism>
    <name type="scientific">Neisseria meningitidis serogroup C (strain 053442)</name>
    <dbReference type="NCBI Taxonomy" id="374833"/>
    <lineage>
        <taxon>Bacteria</taxon>
        <taxon>Pseudomonadati</taxon>
        <taxon>Pseudomonadota</taxon>
        <taxon>Betaproteobacteria</taxon>
        <taxon>Neisseriales</taxon>
        <taxon>Neisseriaceae</taxon>
        <taxon>Neisseria</taxon>
    </lineage>
</organism>
<evidence type="ECO:0000255" key="1">
    <source>
        <dbReference type="HAMAP-Rule" id="MF_01039"/>
    </source>
</evidence>